<organism>
    <name type="scientific">Vibrio atlanticus (strain LGP32)</name>
    <name type="common">Vibrio splendidus (strain Mel32)</name>
    <dbReference type="NCBI Taxonomy" id="575788"/>
    <lineage>
        <taxon>Bacteria</taxon>
        <taxon>Pseudomonadati</taxon>
        <taxon>Pseudomonadota</taxon>
        <taxon>Gammaproteobacteria</taxon>
        <taxon>Vibrionales</taxon>
        <taxon>Vibrionaceae</taxon>
        <taxon>Vibrio</taxon>
    </lineage>
</organism>
<comment type="function">
    <text evidence="1">The RuvA-RuvB-RuvC complex processes Holliday junction (HJ) DNA during genetic recombination and DNA repair, while the RuvA-RuvB complex plays an important role in the rescue of blocked DNA replication forks via replication fork reversal (RFR). RuvA specifically binds to HJ cruciform DNA, conferring on it an open structure. The RuvB hexamer acts as an ATP-dependent pump, pulling dsDNA into and through the RuvAB complex. RuvB forms 2 homohexamers on either side of HJ DNA bound by 1 or 2 RuvA tetramers; 4 subunits per hexamer contact DNA at a time. Coordinated motions by a converter formed by DNA-disengaged RuvB subunits stimulates ATP hydrolysis and nucleotide exchange. Immobilization of the converter enables RuvB to convert the ATP-contained energy into a lever motion, pulling 2 nucleotides of DNA out of the RuvA tetramer per ATP hydrolyzed, thus driving DNA branch migration. The RuvB motors rotate together with the DNA substrate, which together with the progressing nucleotide cycle form the mechanistic basis for DNA recombination by continuous HJ branch migration. Branch migration allows RuvC to scan DNA until it finds its consensus sequence, where it cleaves and resolves cruciform DNA.</text>
</comment>
<comment type="catalytic activity">
    <reaction evidence="1">
        <text>ATP + H2O = ADP + phosphate + H(+)</text>
        <dbReference type="Rhea" id="RHEA:13065"/>
        <dbReference type="ChEBI" id="CHEBI:15377"/>
        <dbReference type="ChEBI" id="CHEBI:15378"/>
        <dbReference type="ChEBI" id="CHEBI:30616"/>
        <dbReference type="ChEBI" id="CHEBI:43474"/>
        <dbReference type="ChEBI" id="CHEBI:456216"/>
    </reaction>
</comment>
<comment type="subunit">
    <text evidence="1">Homohexamer. Forms an RuvA(8)-RuvB(12)-Holliday junction (HJ) complex. HJ DNA is sandwiched between 2 RuvA tetramers; dsDNA enters through RuvA and exits via RuvB. An RuvB hexamer assembles on each DNA strand where it exits the tetramer. Each RuvB hexamer is contacted by two RuvA subunits (via domain III) on 2 adjacent RuvB subunits; this complex drives branch migration. In the full resolvosome a probable DNA-RuvA(4)-RuvB(12)-RuvC(2) complex forms which resolves the HJ.</text>
</comment>
<comment type="subcellular location">
    <subcellularLocation>
        <location evidence="1">Cytoplasm</location>
    </subcellularLocation>
</comment>
<comment type="domain">
    <text evidence="1">Has 3 domains, the large (RuvB-L) and small ATPase (RuvB-S) domains and the C-terminal head (RuvB-H) domain. The head domain binds DNA, while the ATPase domains jointly bind ATP, ADP or are empty depending on the state of the subunit in the translocation cycle. During a single DNA translocation step the structure of each domain remains the same, but their relative positions change.</text>
</comment>
<comment type="similarity">
    <text evidence="1">Belongs to the RuvB family.</text>
</comment>
<keyword id="KW-0067">ATP-binding</keyword>
<keyword id="KW-0963">Cytoplasm</keyword>
<keyword id="KW-0227">DNA damage</keyword>
<keyword id="KW-0233">DNA recombination</keyword>
<keyword id="KW-0234">DNA repair</keyword>
<keyword id="KW-0238">DNA-binding</keyword>
<keyword id="KW-0378">Hydrolase</keyword>
<keyword id="KW-0547">Nucleotide-binding</keyword>
<feature type="chain" id="PRO_1000116666" description="Holliday junction branch migration complex subunit RuvB">
    <location>
        <begin position="1"/>
        <end position="338"/>
    </location>
</feature>
<feature type="region of interest" description="Large ATPase domain (RuvB-L)" evidence="1">
    <location>
        <begin position="4"/>
        <end position="186"/>
    </location>
</feature>
<feature type="region of interest" description="Small ATPAse domain (RuvB-S)" evidence="1">
    <location>
        <begin position="187"/>
        <end position="257"/>
    </location>
</feature>
<feature type="region of interest" description="Head domain (RuvB-H)" evidence="1">
    <location>
        <begin position="260"/>
        <end position="338"/>
    </location>
</feature>
<feature type="binding site" evidence="1">
    <location>
        <position position="25"/>
    </location>
    <ligand>
        <name>ATP</name>
        <dbReference type="ChEBI" id="CHEBI:30616"/>
    </ligand>
</feature>
<feature type="binding site" evidence="1">
    <location>
        <position position="26"/>
    </location>
    <ligand>
        <name>ATP</name>
        <dbReference type="ChEBI" id="CHEBI:30616"/>
    </ligand>
</feature>
<feature type="binding site" evidence="1">
    <location>
        <position position="67"/>
    </location>
    <ligand>
        <name>ATP</name>
        <dbReference type="ChEBI" id="CHEBI:30616"/>
    </ligand>
</feature>
<feature type="binding site" evidence="1">
    <location>
        <position position="70"/>
    </location>
    <ligand>
        <name>ATP</name>
        <dbReference type="ChEBI" id="CHEBI:30616"/>
    </ligand>
</feature>
<feature type="binding site" evidence="1">
    <location>
        <position position="71"/>
    </location>
    <ligand>
        <name>ATP</name>
        <dbReference type="ChEBI" id="CHEBI:30616"/>
    </ligand>
</feature>
<feature type="binding site" evidence="1">
    <location>
        <position position="71"/>
    </location>
    <ligand>
        <name>Mg(2+)</name>
        <dbReference type="ChEBI" id="CHEBI:18420"/>
    </ligand>
</feature>
<feature type="binding site" evidence="1">
    <location>
        <position position="72"/>
    </location>
    <ligand>
        <name>ATP</name>
        <dbReference type="ChEBI" id="CHEBI:30616"/>
    </ligand>
</feature>
<feature type="binding site" evidence="1">
    <location>
        <begin position="133"/>
        <end position="135"/>
    </location>
    <ligand>
        <name>ATP</name>
        <dbReference type="ChEBI" id="CHEBI:30616"/>
    </ligand>
</feature>
<feature type="binding site" evidence="1">
    <location>
        <position position="176"/>
    </location>
    <ligand>
        <name>ATP</name>
        <dbReference type="ChEBI" id="CHEBI:30616"/>
    </ligand>
</feature>
<feature type="binding site" evidence="1">
    <location>
        <position position="186"/>
    </location>
    <ligand>
        <name>ATP</name>
        <dbReference type="ChEBI" id="CHEBI:30616"/>
    </ligand>
</feature>
<feature type="binding site" evidence="1">
    <location>
        <position position="223"/>
    </location>
    <ligand>
        <name>ATP</name>
        <dbReference type="ChEBI" id="CHEBI:30616"/>
    </ligand>
</feature>
<feature type="binding site" evidence="1">
    <location>
        <position position="296"/>
    </location>
    <ligand>
        <name>DNA</name>
        <dbReference type="ChEBI" id="CHEBI:16991"/>
    </ligand>
</feature>
<feature type="binding site" evidence="1">
    <location>
        <position position="315"/>
    </location>
    <ligand>
        <name>DNA</name>
        <dbReference type="ChEBI" id="CHEBI:16991"/>
    </ligand>
</feature>
<feature type="binding site" evidence="1">
    <location>
        <position position="320"/>
    </location>
    <ligand>
        <name>DNA</name>
        <dbReference type="ChEBI" id="CHEBI:16991"/>
    </ligand>
</feature>
<evidence type="ECO:0000255" key="1">
    <source>
        <dbReference type="HAMAP-Rule" id="MF_00016"/>
    </source>
</evidence>
<reference key="1">
    <citation type="submission" date="2009-02" db="EMBL/GenBank/DDBJ databases">
        <title>Vibrio splendidus str. LGP32 complete genome.</title>
        <authorList>
            <person name="Mazel D."/>
            <person name="Le Roux F."/>
        </authorList>
    </citation>
    <scope>NUCLEOTIDE SEQUENCE [LARGE SCALE GENOMIC DNA]</scope>
    <source>
        <strain>LGP32</strain>
    </source>
</reference>
<accession>B7VMI4</accession>
<dbReference type="EC" id="3.6.4.-" evidence="1"/>
<dbReference type="EMBL" id="FM954972">
    <property type="protein sequence ID" value="CAV18234.1"/>
    <property type="molecule type" value="Genomic_DNA"/>
</dbReference>
<dbReference type="SMR" id="B7VMI4"/>
<dbReference type="STRING" id="575788.VS_1108"/>
<dbReference type="KEGG" id="vsp:VS_1108"/>
<dbReference type="PATRIC" id="fig|575788.5.peg.2431"/>
<dbReference type="eggNOG" id="COG2255">
    <property type="taxonomic scope" value="Bacteria"/>
</dbReference>
<dbReference type="HOGENOM" id="CLU_055599_1_0_6"/>
<dbReference type="Proteomes" id="UP000009100">
    <property type="component" value="Chromosome 1"/>
</dbReference>
<dbReference type="GO" id="GO:0005737">
    <property type="term" value="C:cytoplasm"/>
    <property type="evidence" value="ECO:0007669"/>
    <property type="project" value="UniProtKB-SubCell"/>
</dbReference>
<dbReference type="GO" id="GO:0048476">
    <property type="term" value="C:Holliday junction resolvase complex"/>
    <property type="evidence" value="ECO:0007669"/>
    <property type="project" value="UniProtKB-UniRule"/>
</dbReference>
<dbReference type="GO" id="GO:0005524">
    <property type="term" value="F:ATP binding"/>
    <property type="evidence" value="ECO:0007669"/>
    <property type="project" value="UniProtKB-UniRule"/>
</dbReference>
<dbReference type="GO" id="GO:0016887">
    <property type="term" value="F:ATP hydrolysis activity"/>
    <property type="evidence" value="ECO:0007669"/>
    <property type="project" value="InterPro"/>
</dbReference>
<dbReference type="GO" id="GO:0000400">
    <property type="term" value="F:four-way junction DNA binding"/>
    <property type="evidence" value="ECO:0007669"/>
    <property type="project" value="UniProtKB-UniRule"/>
</dbReference>
<dbReference type="GO" id="GO:0009378">
    <property type="term" value="F:four-way junction helicase activity"/>
    <property type="evidence" value="ECO:0007669"/>
    <property type="project" value="InterPro"/>
</dbReference>
<dbReference type="GO" id="GO:0006310">
    <property type="term" value="P:DNA recombination"/>
    <property type="evidence" value="ECO:0007669"/>
    <property type="project" value="UniProtKB-UniRule"/>
</dbReference>
<dbReference type="GO" id="GO:0006281">
    <property type="term" value="P:DNA repair"/>
    <property type="evidence" value="ECO:0007669"/>
    <property type="project" value="UniProtKB-UniRule"/>
</dbReference>
<dbReference type="CDD" id="cd00009">
    <property type="entry name" value="AAA"/>
    <property type="match status" value="1"/>
</dbReference>
<dbReference type="FunFam" id="1.10.10.10:FF:000086">
    <property type="entry name" value="Holliday junction ATP-dependent DNA helicase RuvB"/>
    <property type="match status" value="1"/>
</dbReference>
<dbReference type="FunFam" id="1.10.8.60:FF:000023">
    <property type="entry name" value="Holliday junction ATP-dependent DNA helicase RuvB"/>
    <property type="match status" value="1"/>
</dbReference>
<dbReference type="FunFam" id="3.40.50.300:FF:000073">
    <property type="entry name" value="Holliday junction ATP-dependent DNA helicase RuvB"/>
    <property type="match status" value="1"/>
</dbReference>
<dbReference type="Gene3D" id="1.10.8.60">
    <property type="match status" value="1"/>
</dbReference>
<dbReference type="Gene3D" id="3.40.50.300">
    <property type="entry name" value="P-loop containing nucleotide triphosphate hydrolases"/>
    <property type="match status" value="1"/>
</dbReference>
<dbReference type="Gene3D" id="1.10.10.10">
    <property type="entry name" value="Winged helix-like DNA-binding domain superfamily/Winged helix DNA-binding domain"/>
    <property type="match status" value="1"/>
</dbReference>
<dbReference type="HAMAP" id="MF_00016">
    <property type="entry name" value="DNA_HJ_migration_RuvB"/>
    <property type="match status" value="1"/>
</dbReference>
<dbReference type="InterPro" id="IPR003593">
    <property type="entry name" value="AAA+_ATPase"/>
</dbReference>
<dbReference type="InterPro" id="IPR041445">
    <property type="entry name" value="AAA_lid_4"/>
</dbReference>
<dbReference type="InterPro" id="IPR004605">
    <property type="entry name" value="DNA_helicase_Holl-junc_RuvB"/>
</dbReference>
<dbReference type="InterPro" id="IPR027417">
    <property type="entry name" value="P-loop_NTPase"/>
</dbReference>
<dbReference type="InterPro" id="IPR008824">
    <property type="entry name" value="RuvB-like_N"/>
</dbReference>
<dbReference type="InterPro" id="IPR008823">
    <property type="entry name" value="RuvB_C"/>
</dbReference>
<dbReference type="InterPro" id="IPR036388">
    <property type="entry name" value="WH-like_DNA-bd_sf"/>
</dbReference>
<dbReference type="InterPro" id="IPR036390">
    <property type="entry name" value="WH_DNA-bd_sf"/>
</dbReference>
<dbReference type="NCBIfam" id="NF000868">
    <property type="entry name" value="PRK00080.1"/>
    <property type="match status" value="1"/>
</dbReference>
<dbReference type="NCBIfam" id="TIGR00635">
    <property type="entry name" value="ruvB"/>
    <property type="match status" value="1"/>
</dbReference>
<dbReference type="PANTHER" id="PTHR42848">
    <property type="match status" value="1"/>
</dbReference>
<dbReference type="PANTHER" id="PTHR42848:SF1">
    <property type="entry name" value="HOLLIDAY JUNCTION BRANCH MIGRATION COMPLEX SUBUNIT RUVB"/>
    <property type="match status" value="1"/>
</dbReference>
<dbReference type="Pfam" id="PF17864">
    <property type="entry name" value="AAA_lid_4"/>
    <property type="match status" value="1"/>
</dbReference>
<dbReference type="Pfam" id="PF05491">
    <property type="entry name" value="RuvB_C"/>
    <property type="match status" value="1"/>
</dbReference>
<dbReference type="Pfam" id="PF05496">
    <property type="entry name" value="RuvB_N"/>
    <property type="match status" value="1"/>
</dbReference>
<dbReference type="SMART" id="SM00382">
    <property type="entry name" value="AAA"/>
    <property type="match status" value="1"/>
</dbReference>
<dbReference type="SUPFAM" id="SSF52540">
    <property type="entry name" value="P-loop containing nucleoside triphosphate hydrolases"/>
    <property type="match status" value="1"/>
</dbReference>
<dbReference type="SUPFAM" id="SSF46785">
    <property type="entry name" value="Winged helix' DNA-binding domain"/>
    <property type="match status" value="1"/>
</dbReference>
<gene>
    <name evidence="1" type="primary">ruvB</name>
    <name type="ordered locus">VS_1108</name>
</gene>
<name>RUVB_VIBA3</name>
<sequence>MIEADRLIAPDNPVFKDEDVIDRAIRPKALADYQGQDHVRGQMEIFIKAAQMRNEALDHLLIFGPPGLGKTTLANIVANEMDVNIRTTSGPVLEKAGDLAALLTNLEENDVLFIDEIHRLSPVVEEVLYPAMEDYQLDIMIGEGPAARSIKIDLPPFTLIGATTRAGSLTSPLRDRFGITQRLEYYKVEDLQNIVQRSADCLGLSMESQGALEVARRARGTPRIANRLLRRVRDYAEVKGDGHICPEVADKALNMLDVDAKGFDYMDRKLLLAIMEKFGGGPVGIDNMAAAIGEERDTIEDVLEPYLIQQGYLQRTPRGRIATDRAYLHFGIDKPSNR</sequence>
<proteinExistence type="inferred from homology"/>
<protein>
    <recommendedName>
        <fullName evidence="1">Holliday junction branch migration complex subunit RuvB</fullName>
        <ecNumber evidence="1">3.6.4.-</ecNumber>
    </recommendedName>
</protein>